<dbReference type="EC" id="3.1.11.-" evidence="1"/>
<dbReference type="EC" id="3.1.13.-" evidence="1"/>
<dbReference type="EMBL" id="CP002272">
    <property type="protein sequence ID" value="ADO50430.1"/>
    <property type="molecule type" value="Genomic_DNA"/>
</dbReference>
<dbReference type="RefSeq" id="WP_013368142.1">
    <property type="nucleotide sequence ID" value="NC_014618.1"/>
</dbReference>
<dbReference type="SMR" id="E3G381"/>
<dbReference type="STRING" id="701347.Entcl_4197"/>
<dbReference type="KEGG" id="esc:Entcl_4197"/>
<dbReference type="eggNOG" id="COG0084">
    <property type="taxonomic scope" value="Bacteria"/>
</dbReference>
<dbReference type="HOGENOM" id="CLU_031506_1_2_6"/>
<dbReference type="Proteomes" id="UP000006872">
    <property type="component" value="Chromosome"/>
</dbReference>
<dbReference type="GO" id="GO:0005737">
    <property type="term" value="C:cytoplasm"/>
    <property type="evidence" value="ECO:0007669"/>
    <property type="project" value="UniProtKB-SubCell"/>
</dbReference>
<dbReference type="GO" id="GO:0000175">
    <property type="term" value="F:3'-5'-RNA exonuclease activity"/>
    <property type="evidence" value="ECO:0007669"/>
    <property type="project" value="UniProtKB-UniRule"/>
</dbReference>
<dbReference type="GO" id="GO:0000287">
    <property type="term" value="F:magnesium ion binding"/>
    <property type="evidence" value="ECO:0007669"/>
    <property type="project" value="UniProtKB-UniRule"/>
</dbReference>
<dbReference type="GO" id="GO:0008310">
    <property type="term" value="F:single-stranded DNA 3'-5' DNA exonuclease activity"/>
    <property type="evidence" value="ECO:0007669"/>
    <property type="project" value="UniProtKB-UniRule"/>
</dbReference>
<dbReference type="CDD" id="cd01310">
    <property type="entry name" value="TatD_DNAse"/>
    <property type="match status" value="1"/>
</dbReference>
<dbReference type="FunFam" id="3.20.20.140:FF:000018">
    <property type="entry name" value="3'-5' ssDNA/RNA exonuclease TatD"/>
    <property type="match status" value="1"/>
</dbReference>
<dbReference type="Gene3D" id="3.20.20.140">
    <property type="entry name" value="Metal-dependent hydrolases"/>
    <property type="match status" value="1"/>
</dbReference>
<dbReference type="HAMAP" id="MF_00901">
    <property type="entry name" value="TatD_exonuclease"/>
    <property type="match status" value="1"/>
</dbReference>
<dbReference type="InterPro" id="IPR018228">
    <property type="entry name" value="DNase_TatD-rel_CS"/>
</dbReference>
<dbReference type="InterPro" id="IPR024918">
    <property type="entry name" value="Exonuc_TatD"/>
</dbReference>
<dbReference type="InterPro" id="IPR032466">
    <property type="entry name" value="Metal_Hydrolase"/>
</dbReference>
<dbReference type="InterPro" id="IPR001130">
    <property type="entry name" value="TatD-like"/>
</dbReference>
<dbReference type="InterPro" id="IPR050891">
    <property type="entry name" value="TatD-type_Hydrolase"/>
</dbReference>
<dbReference type="NCBIfam" id="NF007745">
    <property type="entry name" value="PRK10425.1"/>
    <property type="match status" value="1"/>
</dbReference>
<dbReference type="PANTHER" id="PTHR10060:SF15">
    <property type="entry name" value="DEOXYRIBONUCLEASE TATDN1"/>
    <property type="match status" value="1"/>
</dbReference>
<dbReference type="PANTHER" id="PTHR10060">
    <property type="entry name" value="TATD FAMILY DEOXYRIBONUCLEASE"/>
    <property type="match status" value="1"/>
</dbReference>
<dbReference type="Pfam" id="PF01026">
    <property type="entry name" value="TatD_DNase"/>
    <property type="match status" value="1"/>
</dbReference>
<dbReference type="PIRSF" id="PIRSF005902">
    <property type="entry name" value="DNase_TatD"/>
    <property type="match status" value="1"/>
</dbReference>
<dbReference type="SUPFAM" id="SSF51556">
    <property type="entry name" value="Metallo-dependent hydrolases"/>
    <property type="match status" value="1"/>
</dbReference>
<dbReference type="PROSITE" id="PS01090">
    <property type="entry name" value="TATD_2"/>
    <property type="match status" value="1"/>
</dbReference>
<name>TATD_ENTLS</name>
<reference key="1">
    <citation type="journal article" date="2011" name="Stand. Genomic Sci.">
        <title>Complete genome sequence of 'Enterobacter lignolyticus' SCF1.</title>
        <authorList>
            <person name="Deangelis K.M."/>
            <person name="D'Haeseleer P."/>
            <person name="Chivian D."/>
            <person name="Fortney J.L."/>
            <person name="Khudyakov J."/>
            <person name="Simmons B."/>
            <person name="Woo H."/>
            <person name="Arkin A.P."/>
            <person name="Davenport K.W."/>
            <person name="Goodwin L."/>
            <person name="Chen A."/>
            <person name="Ivanova N."/>
            <person name="Kyrpides N.C."/>
            <person name="Mavromatis K."/>
            <person name="Woyke T."/>
            <person name="Hazen T.C."/>
        </authorList>
    </citation>
    <scope>NUCLEOTIDE SEQUENCE [LARGE SCALE GENOMIC DNA]</scope>
    <source>
        <strain>SCF1</strain>
    </source>
</reference>
<protein>
    <recommendedName>
        <fullName evidence="1">3'-5' ssDNA/RNA exonuclease TatD</fullName>
        <ecNumber evidence="1">3.1.11.-</ecNumber>
        <ecNumber evidence="1">3.1.13.-</ecNumber>
    </recommendedName>
    <alternativeName>
        <fullName evidence="1">DNase TatD</fullName>
    </alternativeName>
</protein>
<keyword id="KW-0963">Cytoplasm</keyword>
<keyword id="KW-0269">Exonuclease</keyword>
<keyword id="KW-0378">Hydrolase</keyword>
<keyword id="KW-0460">Magnesium</keyword>
<keyword id="KW-0479">Metal-binding</keyword>
<keyword id="KW-0540">Nuclease</keyword>
<keyword id="KW-1185">Reference proteome</keyword>
<feature type="chain" id="PRO_0000412736" description="3'-5' ssDNA/RNA exonuclease TatD">
    <location>
        <begin position="1"/>
        <end position="260"/>
    </location>
</feature>
<feature type="binding site" evidence="1">
    <location>
        <position position="91"/>
    </location>
    <ligand>
        <name>a divalent metal cation</name>
        <dbReference type="ChEBI" id="CHEBI:60240"/>
    </ligand>
</feature>
<feature type="binding site" evidence="1">
    <location>
        <position position="127"/>
    </location>
    <ligand>
        <name>a divalent metal cation</name>
        <dbReference type="ChEBI" id="CHEBI:60240"/>
    </ligand>
</feature>
<feature type="binding site" evidence="1">
    <location>
        <position position="152"/>
    </location>
    <ligand>
        <name>a divalent metal cation</name>
        <dbReference type="ChEBI" id="CHEBI:60240"/>
    </ligand>
</feature>
<gene>
    <name evidence="1" type="primary">tatD</name>
    <name type="ordered locus">Entcl_4197</name>
</gene>
<organism>
    <name type="scientific">Enterobacter lignolyticus (strain SCF1)</name>
    <dbReference type="NCBI Taxonomy" id="701347"/>
    <lineage>
        <taxon>Bacteria</taxon>
        <taxon>Pseudomonadati</taxon>
        <taxon>Pseudomonadota</taxon>
        <taxon>Gammaproteobacteria</taxon>
        <taxon>Enterobacterales</taxon>
        <taxon>Enterobacteriaceae</taxon>
        <taxon>Pluralibacter</taxon>
    </lineage>
</organism>
<evidence type="ECO:0000255" key="1">
    <source>
        <dbReference type="HAMAP-Rule" id="MF_00901"/>
    </source>
</evidence>
<comment type="function">
    <text evidence="1">3'-5' exonuclease that prefers single-stranded DNA and RNA. May play a role in the H(2)O(2)-induced DNA damage repair.</text>
</comment>
<comment type="cofactor">
    <cofactor evidence="1">
        <name>Mg(2+)</name>
        <dbReference type="ChEBI" id="CHEBI:18420"/>
    </cofactor>
</comment>
<comment type="subunit">
    <text evidence="1">Monomer.</text>
</comment>
<comment type="subcellular location">
    <subcellularLocation>
        <location evidence="1">Cytoplasm</location>
    </subcellularLocation>
</comment>
<comment type="similarity">
    <text evidence="1">Belongs to the metallo-dependent hydrolases superfamily. TatD-type hydrolase family. TatD subfamily.</text>
</comment>
<sequence>MFDIGVNLTSPQFARDHDAVVARAFAAGLSGMLLTGTSLHESEQALALAQRHARCWSTAGVHPHDSSRWTRETEQRIRTLAQAPEVVAIGECGLDFNRNFSTPQAQEAAFSAQLALAAECGMPVFLHCRDAHERFMALLTPWLDKLPGAVLHCFTGTRDELQDCLRHGLYIGITGWVCDERRGLALRDMLPLIPANRLMVETDAPYLLPRDMTPKPGSRRNEPAYLAHIMARIAHWRGEDAQWLSGETDNNVRTLFGVAM</sequence>
<proteinExistence type="inferred from homology"/>
<accession>E3G381</accession>